<name>PETD_PEA</name>
<feature type="chain" id="PRO_0000061879" description="Cytochrome b6-f complex subunit 4">
    <location>
        <begin position="1"/>
        <end position="160"/>
    </location>
</feature>
<feature type="transmembrane region" description="Helical" evidence="2">
    <location>
        <begin position="36"/>
        <end position="56"/>
    </location>
</feature>
<feature type="transmembrane region" description="Helical" evidence="2">
    <location>
        <begin position="95"/>
        <end position="115"/>
    </location>
</feature>
<feature type="transmembrane region" description="Helical" evidence="2">
    <location>
        <begin position="131"/>
        <end position="151"/>
    </location>
</feature>
<proteinExistence type="inferred from homology"/>
<organism>
    <name type="scientific">Pisum sativum</name>
    <name type="common">Garden pea</name>
    <name type="synonym">Lathyrus oleraceus</name>
    <dbReference type="NCBI Taxonomy" id="3888"/>
    <lineage>
        <taxon>Eukaryota</taxon>
        <taxon>Viridiplantae</taxon>
        <taxon>Streptophyta</taxon>
        <taxon>Embryophyta</taxon>
        <taxon>Tracheophyta</taxon>
        <taxon>Spermatophyta</taxon>
        <taxon>Magnoliopsida</taxon>
        <taxon>eudicotyledons</taxon>
        <taxon>Gunneridae</taxon>
        <taxon>Pentapetalae</taxon>
        <taxon>rosids</taxon>
        <taxon>fabids</taxon>
        <taxon>Fabales</taxon>
        <taxon>Fabaceae</taxon>
        <taxon>Papilionoideae</taxon>
        <taxon>50 kb inversion clade</taxon>
        <taxon>NPAAA clade</taxon>
        <taxon>Hologalegina</taxon>
        <taxon>IRL clade</taxon>
        <taxon>Fabeae</taxon>
        <taxon>Pisum</taxon>
    </lineage>
</organism>
<accession>P06527</accession>
<accession>Q9TN11</accession>
<gene>
    <name evidence="2" type="primary">petD</name>
</gene>
<comment type="function">
    <text evidence="2">Component of the cytochrome b6-f complex, which mediates electron transfer between photosystem II (PSII) and photosystem I (PSI), cyclic electron flow around PSI, and state transitions.</text>
</comment>
<comment type="subunit">
    <text evidence="1">The 4 large subunits of the cytochrome b6-f complex are cytochrome b6, subunit IV (17 kDa polypeptide, petD), cytochrome f and the Rieske protein, while the 4 small subunits are petG, petL, petM and petN. The complex functions as a dimer (By similarity).</text>
</comment>
<comment type="subcellular location">
    <subcellularLocation>
        <location evidence="2">Plastid</location>
        <location evidence="2">Chloroplast thylakoid membrane</location>
        <topology evidence="2">Multi-pass membrane protein</topology>
    </subcellularLocation>
</comment>
<comment type="similarity">
    <text evidence="2">Belongs to the cytochrome b family. PetD subfamily.</text>
</comment>
<protein>
    <recommendedName>
        <fullName evidence="2">Cytochrome b6-f complex subunit 4</fullName>
    </recommendedName>
    <alternativeName>
        <fullName evidence="2">17 kDa polypeptide</fullName>
    </alternativeName>
</protein>
<geneLocation type="chloroplast"/>
<sequence>MGVTKKPDLTDPVLRAKLAKGMGHNYYGEPAWPNDLLYIFPVVILGTIACNVGLAVLEPSMIGEPADPFATPLEILPEWYFFPVFQILRTVPNKLLGVLLMVSVPAGLLTVPFLENVNKFQNPFRRPVATTVFLIGTVVALWLGIGATLPIEKSLTLGLF</sequence>
<reference key="1">
    <citation type="journal article" date="1989" name="Physiol. Plantarum">
        <title>Nucleotide sequence of the 5.6 kbp psbB operon of pea chloroplast DNA.</title>
        <authorList>
            <person name="Lehmbeck J."/>
            <person name="Stummann B.M."/>
            <person name="Henningsen K.W."/>
        </authorList>
    </citation>
    <scope>NUCLEOTIDE SEQUENCE [GENOMIC DNA]</scope>
</reference>
<reference key="2">
    <citation type="journal article" date="1984" name="Mol. Gen. Genet.">
        <title>Location and nucleotide sequence of the gene for the 15.2 kDa polypeptide of the cytochrome b-f complex from pea chloroplasts.</title>
        <authorList>
            <person name="Phillips A.L."/>
            <person name="Gray J.C."/>
        </authorList>
    </citation>
    <scope>NUCLEOTIDE SEQUENCE [GENOMIC DNA] OF 22-160</scope>
</reference>
<reference key="3">
    <citation type="journal article" date="1989" name="Mol. Gen. Genet.">
        <title>The plastid rpoA gene encoding a protein homologous to the bacterial RNA polymerase alpha subunit is expressed in pea chloroplasts.</title>
        <authorList>
            <person name="Purton S."/>
            <person name="Gray J.C."/>
        </authorList>
    </citation>
    <scope>NUCLEOTIDE SEQUENCE [GENOMIC DNA] OF 136-160</scope>
    <source>
        <strain>cv. Feltham First</strain>
    </source>
</reference>
<dbReference type="EMBL" id="AF153442">
    <property type="protein sequence ID" value="AAD41889.1"/>
    <property type="molecule type" value="Genomic_DNA"/>
</dbReference>
<dbReference type="EMBL" id="X00535">
    <property type="protein sequence ID" value="CAA25212.1"/>
    <property type="molecule type" value="Genomic_DNA"/>
</dbReference>
<dbReference type="EMBL" id="X15645">
    <property type="protein sequence ID" value="CAA33669.1"/>
    <property type="molecule type" value="Genomic_DNA"/>
</dbReference>
<dbReference type="PIR" id="S07297">
    <property type="entry name" value="S07297"/>
</dbReference>
<dbReference type="RefSeq" id="YP_003587582.1">
    <property type="nucleotide sequence ID" value="NC_014057.1"/>
</dbReference>
<dbReference type="SMR" id="P06527"/>
<dbReference type="GeneID" id="9073137"/>
<dbReference type="GO" id="GO:0009535">
    <property type="term" value="C:chloroplast thylakoid membrane"/>
    <property type="evidence" value="ECO:0007669"/>
    <property type="project" value="UniProtKB-SubCell"/>
</dbReference>
<dbReference type="GO" id="GO:0045158">
    <property type="term" value="F:electron transporter, transferring electrons within cytochrome b6/f complex of photosystem II activity"/>
    <property type="evidence" value="ECO:0007669"/>
    <property type="project" value="UniProtKB-UniRule"/>
</dbReference>
<dbReference type="GO" id="GO:0045156">
    <property type="term" value="F:electron transporter, transferring electrons within the cyclic electron transport pathway of photosynthesis activity"/>
    <property type="evidence" value="ECO:0007669"/>
    <property type="project" value="InterPro"/>
</dbReference>
<dbReference type="GO" id="GO:0016491">
    <property type="term" value="F:oxidoreductase activity"/>
    <property type="evidence" value="ECO:0007669"/>
    <property type="project" value="InterPro"/>
</dbReference>
<dbReference type="GO" id="GO:0009767">
    <property type="term" value="P:photosynthetic electron transport chain"/>
    <property type="evidence" value="ECO:0007669"/>
    <property type="project" value="InterPro"/>
</dbReference>
<dbReference type="CDD" id="cd00290">
    <property type="entry name" value="cytochrome_b_C"/>
    <property type="match status" value="1"/>
</dbReference>
<dbReference type="FunFam" id="1.10.287.980:FF:000001">
    <property type="entry name" value="Cytochrome b6-f complex subunit 4"/>
    <property type="match status" value="1"/>
</dbReference>
<dbReference type="FunFam" id="1.20.5.510:FF:000002">
    <property type="entry name" value="Cytochrome b6-f complex subunit 4"/>
    <property type="match status" value="1"/>
</dbReference>
<dbReference type="Gene3D" id="1.10.287.980">
    <property type="entry name" value="plastocyanin oxidoreductase"/>
    <property type="match status" value="1"/>
</dbReference>
<dbReference type="Gene3D" id="1.20.5.510">
    <property type="entry name" value="Single helix bin"/>
    <property type="match status" value="1"/>
</dbReference>
<dbReference type="HAMAP" id="MF_01344">
    <property type="entry name" value="Cytb6_f_subIV"/>
    <property type="match status" value="1"/>
</dbReference>
<dbReference type="InterPro" id="IPR005798">
    <property type="entry name" value="Cyt_b/b6_C"/>
</dbReference>
<dbReference type="InterPro" id="IPR036150">
    <property type="entry name" value="Cyt_b/b6_C_sf"/>
</dbReference>
<dbReference type="InterPro" id="IPR005870">
    <property type="entry name" value="Cyt_b6/f_cplx_suIV"/>
</dbReference>
<dbReference type="InterPro" id="IPR048260">
    <property type="entry name" value="Cytochrome_b_C_euk/bac"/>
</dbReference>
<dbReference type="NCBIfam" id="TIGR01156">
    <property type="entry name" value="cytb6_f_IV"/>
    <property type="match status" value="1"/>
</dbReference>
<dbReference type="PANTHER" id="PTHR19271">
    <property type="entry name" value="CYTOCHROME B"/>
    <property type="match status" value="1"/>
</dbReference>
<dbReference type="PANTHER" id="PTHR19271:SF40">
    <property type="entry name" value="CYTOCHROME B"/>
    <property type="match status" value="1"/>
</dbReference>
<dbReference type="Pfam" id="PF00032">
    <property type="entry name" value="Cytochrom_B_C"/>
    <property type="match status" value="1"/>
</dbReference>
<dbReference type="PIRSF" id="PIRSF000033">
    <property type="entry name" value="B6f_17K"/>
    <property type="match status" value="1"/>
</dbReference>
<dbReference type="SUPFAM" id="SSF81648">
    <property type="entry name" value="a domain/subunit of cytochrome bc1 complex (Ubiquinol-cytochrome c reductase)"/>
    <property type="match status" value="1"/>
</dbReference>
<dbReference type="PROSITE" id="PS51003">
    <property type="entry name" value="CYTB_CTER"/>
    <property type="match status" value="1"/>
</dbReference>
<keyword id="KW-0150">Chloroplast</keyword>
<keyword id="KW-0249">Electron transport</keyword>
<keyword id="KW-0472">Membrane</keyword>
<keyword id="KW-0602">Photosynthesis</keyword>
<keyword id="KW-0934">Plastid</keyword>
<keyword id="KW-0793">Thylakoid</keyword>
<keyword id="KW-0812">Transmembrane</keyword>
<keyword id="KW-1133">Transmembrane helix</keyword>
<keyword id="KW-0813">Transport</keyword>
<evidence type="ECO:0000250" key="1"/>
<evidence type="ECO:0000255" key="2">
    <source>
        <dbReference type="HAMAP-Rule" id="MF_01344"/>
    </source>
</evidence>